<gene>
    <name evidence="1" type="primary">trpA</name>
    <name type="ordered locus">Plut_0545</name>
</gene>
<organism>
    <name type="scientific">Chlorobium luteolum (strain DSM 273 / BCRC 81028 / 2530)</name>
    <name type="common">Pelodictyon luteolum</name>
    <dbReference type="NCBI Taxonomy" id="319225"/>
    <lineage>
        <taxon>Bacteria</taxon>
        <taxon>Pseudomonadati</taxon>
        <taxon>Chlorobiota</taxon>
        <taxon>Chlorobiia</taxon>
        <taxon>Chlorobiales</taxon>
        <taxon>Chlorobiaceae</taxon>
        <taxon>Chlorobium/Pelodictyon group</taxon>
        <taxon>Pelodictyon</taxon>
    </lineage>
</organism>
<dbReference type="EC" id="4.2.1.20" evidence="1"/>
<dbReference type="EMBL" id="CP000096">
    <property type="protein sequence ID" value="ABB23429.1"/>
    <property type="molecule type" value="Genomic_DNA"/>
</dbReference>
<dbReference type="RefSeq" id="WP_011357304.1">
    <property type="nucleotide sequence ID" value="NC_007512.1"/>
</dbReference>
<dbReference type="SMR" id="Q3B5F2"/>
<dbReference type="STRING" id="319225.Plut_0545"/>
<dbReference type="KEGG" id="plt:Plut_0545"/>
<dbReference type="eggNOG" id="COG0159">
    <property type="taxonomic scope" value="Bacteria"/>
</dbReference>
<dbReference type="HOGENOM" id="CLU_016734_0_0_10"/>
<dbReference type="OrthoDB" id="9804578at2"/>
<dbReference type="UniPathway" id="UPA00035">
    <property type="reaction ID" value="UER00044"/>
</dbReference>
<dbReference type="Proteomes" id="UP000002709">
    <property type="component" value="Chromosome"/>
</dbReference>
<dbReference type="GO" id="GO:0005829">
    <property type="term" value="C:cytosol"/>
    <property type="evidence" value="ECO:0007669"/>
    <property type="project" value="TreeGrafter"/>
</dbReference>
<dbReference type="GO" id="GO:0004834">
    <property type="term" value="F:tryptophan synthase activity"/>
    <property type="evidence" value="ECO:0007669"/>
    <property type="project" value="UniProtKB-UniRule"/>
</dbReference>
<dbReference type="CDD" id="cd04724">
    <property type="entry name" value="Tryptophan_synthase_alpha"/>
    <property type="match status" value="1"/>
</dbReference>
<dbReference type="Gene3D" id="3.20.20.70">
    <property type="entry name" value="Aldolase class I"/>
    <property type="match status" value="1"/>
</dbReference>
<dbReference type="HAMAP" id="MF_00131">
    <property type="entry name" value="Trp_synth_alpha"/>
    <property type="match status" value="1"/>
</dbReference>
<dbReference type="InterPro" id="IPR013785">
    <property type="entry name" value="Aldolase_TIM"/>
</dbReference>
<dbReference type="InterPro" id="IPR011060">
    <property type="entry name" value="RibuloseP-bd_barrel"/>
</dbReference>
<dbReference type="InterPro" id="IPR018204">
    <property type="entry name" value="Trp_synthase_alpha_AS"/>
</dbReference>
<dbReference type="InterPro" id="IPR002028">
    <property type="entry name" value="Trp_synthase_suA"/>
</dbReference>
<dbReference type="NCBIfam" id="TIGR00262">
    <property type="entry name" value="trpA"/>
    <property type="match status" value="1"/>
</dbReference>
<dbReference type="PANTHER" id="PTHR43406:SF1">
    <property type="entry name" value="TRYPTOPHAN SYNTHASE ALPHA CHAIN, CHLOROPLASTIC"/>
    <property type="match status" value="1"/>
</dbReference>
<dbReference type="PANTHER" id="PTHR43406">
    <property type="entry name" value="TRYPTOPHAN SYNTHASE, ALPHA CHAIN"/>
    <property type="match status" value="1"/>
</dbReference>
<dbReference type="Pfam" id="PF00290">
    <property type="entry name" value="Trp_syntA"/>
    <property type="match status" value="1"/>
</dbReference>
<dbReference type="SUPFAM" id="SSF51366">
    <property type="entry name" value="Ribulose-phoshate binding barrel"/>
    <property type="match status" value="1"/>
</dbReference>
<dbReference type="PROSITE" id="PS00167">
    <property type="entry name" value="TRP_SYNTHASE_ALPHA"/>
    <property type="match status" value="1"/>
</dbReference>
<feature type="chain" id="PRO_1000117743" description="Tryptophan synthase alpha chain">
    <location>
        <begin position="1"/>
        <end position="270"/>
    </location>
</feature>
<feature type="active site" description="Proton acceptor" evidence="1">
    <location>
        <position position="50"/>
    </location>
</feature>
<feature type="active site" description="Proton acceptor" evidence="1">
    <location>
        <position position="61"/>
    </location>
</feature>
<keyword id="KW-0028">Amino-acid biosynthesis</keyword>
<keyword id="KW-0057">Aromatic amino acid biosynthesis</keyword>
<keyword id="KW-0456">Lyase</keyword>
<keyword id="KW-1185">Reference proteome</keyword>
<keyword id="KW-0822">Tryptophan biosynthesis</keyword>
<protein>
    <recommendedName>
        <fullName evidence="1">Tryptophan synthase alpha chain</fullName>
        <ecNumber evidence="1">4.2.1.20</ecNumber>
    </recommendedName>
</protein>
<evidence type="ECO:0000255" key="1">
    <source>
        <dbReference type="HAMAP-Rule" id="MF_00131"/>
    </source>
</evidence>
<reference key="1">
    <citation type="submission" date="2005-08" db="EMBL/GenBank/DDBJ databases">
        <title>Complete sequence of Pelodictyon luteolum DSM 273.</title>
        <authorList>
            <consortium name="US DOE Joint Genome Institute"/>
            <person name="Copeland A."/>
            <person name="Lucas S."/>
            <person name="Lapidus A."/>
            <person name="Barry K."/>
            <person name="Detter J.C."/>
            <person name="Glavina T."/>
            <person name="Hammon N."/>
            <person name="Israni S."/>
            <person name="Pitluck S."/>
            <person name="Bryant D."/>
            <person name="Schmutz J."/>
            <person name="Larimer F."/>
            <person name="Land M."/>
            <person name="Kyrpides N."/>
            <person name="Ivanova N."/>
            <person name="Richardson P."/>
        </authorList>
    </citation>
    <scope>NUCLEOTIDE SEQUENCE [LARGE SCALE GENOMIC DNA]</scope>
    <source>
        <strain>DSM 273 / BCRC 81028 / 2530</strain>
    </source>
</reference>
<comment type="function">
    <text evidence="1">The alpha subunit is responsible for the aldol cleavage of indoleglycerol phosphate to indole and glyceraldehyde 3-phosphate.</text>
</comment>
<comment type="catalytic activity">
    <reaction evidence="1">
        <text>(1S,2R)-1-C-(indol-3-yl)glycerol 3-phosphate + L-serine = D-glyceraldehyde 3-phosphate + L-tryptophan + H2O</text>
        <dbReference type="Rhea" id="RHEA:10532"/>
        <dbReference type="ChEBI" id="CHEBI:15377"/>
        <dbReference type="ChEBI" id="CHEBI:33384"/>
        <dbReference type="ChEBI" id="CHEBI:57912"/>
        <dbReference type="ChEBI" id="CHEBI:58866"/>
        <dbReference type="ChEBI" id="CHEBI:59776"/>
        <dbReference type="EC" id="4.2.1.20"/>
    </reaction>
</comment>
<comment type="pathway">
    <text evidence="1">Amino-acid biosynthesis; L-tryptophan biosynthesis; L-tryptophan from chorismate: step 5/5.</text>
</comment>
<comment type="subunit">
    <text evidence="1">Tetramer of two alpha and two beta chains.</text>
</comment>
<comment type="similarity">
    <text evidence="1">Belongs to the TrpA family.</text>
</comment>
<accession>Q3B5F2</accession>
<sequence length="270" mass="29396">MTQKKENRITARLREDRKLLLAYYMPEFPVAGSTLPVLEALQDGGADIIELGIPFSDPVGDGPVIQNAAHIAIRNGVSVRSLLELVRKARAGEGCRKITVPILLMGYSNPLIAYGGDCFLHDAVKAGVDGLLIPDLPPEESADFLQRAKSLGLTVVYLISPVTPPERIEWIDSLSTDFSYCLAVNATTGTAKLADASTEASVDRYLERVRLHARKKFVVGFGIRDRARVEHMWRLADGAVVGTALLEHIAGAPNPGEAARRAGEFWRGLR</sequence>
<name>TRPA_CHLL3</name>
<proteinExistence type="inferred from homology"/>